<gene>
    <name evidence="9" type="primary">mlfA</name>
    <name type="ORF">BO87DRAFT_442288</name>
</gene>
<accession>A0A318Z3U0</accession>
<reference key="1">
    <citation type="journal article" date="2018" name="Nat. Genet.">
        <title>Investigation of inter- and intraspecies variation through genome sequencing of Aspergillus section Nigri.</title>
        <authorList>
            <person name="Vesth T.C."/>
            <person name="Nybo J.L."/>
            <person name="Theobald S."/>
            <person name="Frisvad J.C."/>
            <person name="Larsen T.O."/>
            <person name="Nielsen K.F."/>
            <person name="Hoof J.B."/>
            <person name="Brandl J."/>
            <person name="Salamov A."/>
            <person name="Riley R."/>
            <person name="Gladden J.M."/>
            <person name="Phatale P."/>
            <person name="Nielsen M.T."/>
            <person name="Lyhne E.K."/>
            <person name="Kogle M.E."/>
            <person name="Strasser K."/>
            <person name="McDonnell E."/>
            <person name="Barry K."/>
            <person name="Clum A."/>
            <person name="Chen C."/>
            <person name="LaButti K."/>
            <person name="Haridas S."/>
            <person name="Nolan M."/>
            <person name="Sandor L."/>
            <person name="Kuo A."/>
            <person name="Lipzen A."/>
            <person name="Hainaut M."/>
            <person name="Drula E."/>
            <person name="Tsang A."/>
            <person name="Magnuson J.K."/>
            <person name="Henrissat B."/>
            <person name="Wiebenga A."/>
            <person name="Simmons B.A."/>
            <person name="Maekelae M.R."/>
            <person name="de Vries R.P."/>
            <person name="Grigoriev I.V."/>
            <person name="Mortensen U.H."/>
            <person name="Baker S.E."/>
            <person name="Andersen M.R."/>
        </authorList>
    </citation>
    <scope>NUCLEOTIDE SEQUENCE [LARGE SCALE GENOMIC DNA]</scope>
    <source>
        <strain>CBS 115656</strain>
    </source>
</reference>
<reference key="2">
    <citation type="journal article" date="2009" name="J. Antibiot.">
        <title>Solid-phase synthesis and biological activity of malformin C and its derivatives.</title>
        <authorList>
            <person name="Kojima Y."/>
            <person name="Sunazuka T."/>
            <person name="Nagai K."/>
            <person name="Hirose T."/>
            <person name="Namatame M."/>
            <person name="Ishiyama A."/>
            <person name="Otoguro K."/>
            <person name="Omura S."/>
        </authorList>
    </citation>
    <scope>BIOTECHNOLOGY</scope>
</reference>
<reference key="3">
    <citation type="journal article" date="2015" name="PLoS ONE">
        <title>Study of malformin C, a fungal source cyclic pentapeptide, as an anti-cancer drug.</title>
        <authorList>
            <person name="Wang J."/>
            <person name="Jiang Z."/>
            <person name="Lam W."/>
            <person name="Gullen E.A."/>
            <person name="Yu Z."/>
            <person name="Wei Y."/>
            <person name="Wang L."/>
            <person name="Zeiss C."/>
            <person name="Beck A."/>
            <person name="Cheng E.C."/>
            <person name="Wu C."/>
            <person name="Cheng Y.C."/>
            <person name="Zhang Y."/>
        </authorList>
    </citation>
    <scope>BIOTECHNOLOGY</scope>
</reference>
<reference key="4">
    <citation type="journal article" date="2016" name="Cancer Chemother. Pharmacol.">
        <title>Malformin A1 promotes cell death through induction of apoptosis, necrosis and autophagy in prostate cancer cells.</title>
        <authorList>
            <person name="Liu Y."/>
            <person name="Wang M."/>
            <person name="Wang D."/>
            <person name="Li X."/>
            <person name="Wang W."/>
            <person name="Lou H."/>
            <person name="Yuan H."/>
        </authorList>
    </citation>
    <scope>BIOTECHNOLOGY</scope>
</reference>
<reference key="5">
    <citation type="journal article" date="2017" name="Int. J. Oncol.">
        <title>Malformin A1 treatment alters invasive and oncogenic phenotypes of human colorectal cancer cells through stimulation of the p38 signaling pathway.</title>
        <authorList>
            <person name="Park S.Y."/>
            <person name="Oh H.H."/>
            <person name="Park Y.L."/>
            <person name="Yu H.M."/>
            <person name="Myung D.S."/>
            <person name="Cho S.B."/>
            <person name="Lee W.S."/>
            <person name="Park D."/>
            <person name="Joo Y.E."/>
        </authorList>
    </citation>
    <scope>BIOTECHNOLOGY</scope>
</reference>
<reference key="6">
    <citation type="journal article" date="2018" name="Sci. Rep.">
        <title>Uncovering secondary metabolite evolution and biosynthesis using gene cluster networks and genetic dereplication.</title>
        <authorList>
            <person name="Theobald S."/>
            <person name="Vesth T.C."/>
            <person name="Rendsvig J.K."/>
            <person name="Nielsen K.F."/>
            <person name="Riley R."/>
            <person name="de Abreu L.M."/>
            <person name="Salamov A."/>
            <person name="Frisvad J.C."/>
            <person name="Larsen T.O."/>
            <person name="Andersen M.R."/>
            <person name="Hoof J.B."/>
        </authorList>
    </citation>
    <scope>IDENTIFICATION</scope>
    <scope>FUNCTION</scope>
    <scope>PATHWAY</scope>
</reference>
<keyword id="KW-0436">Ligase</keyword>
<keyword id="KW-0596">Phosphopantetheine</keyword>
<keyword id="KW-0597">Phosphoprotein</keyword>
<keyword id="KW-0677">Repeat</keyword>
<dbReference type="EC" id="6.3.2.-" evidence="8"/>
<dbReference type="EMBL" id="KZ821472">
    <property type="protein sequence ID" value="PYH31622.1"/>
    <property type="molecule type" value="Genomic_DNA"/>
</dbReference>
<dbReference type="SMR" id="A0A318Z3U0"/>
<dbReference type="OrthoDB" id="416786at2759"/>
<dbReference type="Proteomes" id="UP000247647">
    <property type="component" value="Unassembled WGS sequence"/>
</dbReference>
<dbReference type="GO" id="GO:0005737">
    <property type="term" value="C:cytoplasm"/>
    <property type="evidence" value="ECO:0007669"/>
    <property type="project" value="TreeGrafter"/>
</dbReference>
<dbReference type="GO" id="GO:0016874">
    <property type="term" value="F:ligase activity"/>
    <property type="evidence" value="ECO:0007669"/>
    <property type="project" value="UniProtKB-KW"/>
</dbReference>
<dbReference type="GO" id="GO:0031177">
    <property type="term" value="F:phosphopantetheine binding"/>
    <property type="evidence" value="ECO:0007669"/>
    <property type="project" value="InterPro"/>
</dbReference>
<dbReference type="GO" id="GO:0043041">
    <property type="term" value="P:amino acid activation for nonribosomal peptide biosynthetic process"/>
    <property type="evidence" value="ECO:0007669"/>
    <property type="project" value="TreeGrafter"/>
</dbReference>
<dbReference type="GO" id="GO:0044550">
    <property type="term" value="P:secondary metabolite biosynthetic process"/>
    <property type="evidence" value="ECO:0007669"/>
    <property type="project" value="TreeGrafter"/>
</dbReference>
<dbReference type="CDD" id="cd05918">
    <property type="entry name" value="A_NRPS_SidN3_like"/>
    <property type="match status" value="4"/>
</dbReference>
<dbReference type="CDD" id="cd19542">
    <property type="entry name" value="CT_NRPS-like"/>
    <property type="match status" value="1"/>
</dbReference>
<dbReference type="CDD" id="cd19545">
    <property type="entry name" value="FUM14_C_NRPS-like"/>
    <property type="match status" value="1"/>
</dbReference>
<dbReference type="FunFam" id="3.30.559.30:FF:000002">
    <property type="entry name" value="Nonribosomal peptide synthase Pes1"/>
    <property type="match status" value="1"/>
</dbReference>
<dbReference type="FunFam" id="3.30.300.30:FF:000015">
    <property type="entry name" value="Nonribosomal peptide synthase SidD"/>
    <property type="match status" value="4"/>
</dbReference>
<dbReference type="FunFam" id="3.30.559.30:FF:000003">
    <property type="entry name" value="Nonribosomal peptide synthase SidD"/>
    <property type="match status" value="1"/>
</dbReference>
<dbReference type="Gene3D" id="3.30.300.30">
    <property type="match status" value="4"/>
</dbReference>
<dbReference type="Gene3D" id="1.10.1200.10">
    <property type="entry name" value="ACP-like"/>
    <property type="match status" value="4"/>
</dbReference>
<dbReference type="Gene3D" id="3.30.559.10">
    <property type="entry name" value="Chloramphenicol acetyltransferase-like domain"/>
    <property type="match status" value="4"/>
</dbReference>
<dbReference type="Gene3D" id="3.40.50.12780">
    <property type="entry name" value="N-terminal domain of ligase-like"/>
    <property type="match status" value="4"/>
</dbReference>
<dbReference type="Gene3D" id="3.30.559.30">
    <property type="entry name" value="Nonribosomal peptide synthetase, condensation domain"/>
    <property type="match status" value="5"/>
</dbReference>
<dbReference type="InterPro" id="IPR010071">
    <property type="entry name" value="AA_adenyl_dom"/>
</dbReference>
<dbReference type="InterPro" id="IPR036736">
    <property type="entry name" value="ACP-like_sf"/>
</dbReference>
<dbReference type="InterPro" id="IPR045851">
    <property type="entry name" value="AMP-bd_C_sf"/>
</dbReference>
<dbReference type="InterPro" id="IPR020845">
    <property type="entry name" value="AMP-binding_CS"/>
</dbReference>
<dbReference type="InterPro" id="IPR000873">
    <property type="entry name" value="AMP-dep_synth/lig_dom"/>
</dbReference>
<dbReference type="InterPro" id="IPR042099">
    <property type="entry name" value="ANL_N_sf"/>
</dbReference>
<dbReference type="InterPro" id="IPR023213">
    <property type="entry name" value="CAT-like_dom_sf"/>
</dbReference>
<dbReference type="InterPro" id="IPR001242">
    <property type="entry name" value="Condensatn"/>
</dbReference>
<dbReference type="InterPro" id="IPR020806">
    <property type="entry name" value="PKS_PP-bd"/>
</dbReference>
<dbReference type="InterPro" id="IPR009081">
    <property type="entry name" value="PP-bd_ACP"/>
</dbReference>
<dbReference type="NCBIfam" id="TIGR01733">
    <property type="entry name" value="AA-adenyl-dom"/>
    <property type="match status" value="2"/>
</dbReference>
<dbReference type="NCBIfam" id="NF003417">
    <property type="entry name" value="PRK04813.1"/>
    <property type="match status" value="6"/>
</dbReference>
<dbReference type="PANTHER" id="PTHR45527:SF1">
    <property type="entry name" value="FATTY ACID SYNTHASE"/>
    <property type="match status" value="1"/>
</dbReference>
<dbReference type="PANTHER" id="PTHR45527">
    <property type="entry name" value="NONRIBOSOMAL PEPTIDE SYNTHETASE"/>
    <property type="match status" value="1"/>
</dbReference>
<dbReference type="Pfam" id="PF00501">
    <property type="entry name" value="AMP-binding"/>
    <property type="match status" value="4"/>
</dbReference>
<dbReference type="Pfam" id="PF00668">
    <property type="entry name" value="Condensation"/>
    <property type="match status" value="5"/>
</dbReference>
<dbReference type="Pfam" id="PF00550">
    <property type="entry name" value="PP-binding"/>
    <property type="match status" value="4"/>
</dbReference>
<dbReference type="SMART" id="SM00823">
    <property type="entry name" value="PKS_PP"/>
    <property type="match status" value="3"/>
</dbReference>
<dbReference type="SMART" id="SM01294">
    <property type="entry name" value="PKS_PP_betabranch"/>
    <property type="match status" value="1"/>
</dbReference>
<dbReference type="SUPFAM" id="SSF56801">
    <property type="entry name" value="Acetyl-CoA synthetase-like"/>
    <property type="match status" value="4"/>
</dbReference>
<dbReference type="SUPFAM" id="SSF47336">
    <property type="entry name" value="ACP-like"/>
    <property type="match status" value="4"/>
</dbReference>
<dbReference type="SUPFAM" id="SSF52777">
    <property type="entry name" value="CoA-dependent acyltransferases"/>
    <property type="match status" value="10"/>
</dbReference>
<dbReference type="PROSITE" id="PS00455">
    <property type="entry name" value="AMP_BINDING"/>
    <property type="match status" value="3"/>
</dbReference>
<dbReference type="PROSITE" id="PS50075">
    <property type="entry name" value="CARRIER"/>
    <property type="match status" value="4"/>
</dbReference>
<proteinExistence type="evidence at protein level"/>
<comment type="function">
    <text evidence="8 11">Nonribosomal peptide synthetase; part of the gene cluster that mediates the biosynthesis of malformins, cyclic pentapeptides with a disulfide bond between 2 consecutive cysteins, that show potential anti-tumor as well as antimalarial and antitrypanosomal properties (PubMed:30560908). The nonribosomal peptide synthetase mlfA is responsible of the formation of the cyclic pentapeptide (Probable). The malformin biosynthesis clusters in malformin-producing fungi also contain enzymes involved in the formation of the disulfide bond between the two consecutive cysteins within malformins, in addition to additional tailoring enzymes such as methyltransferases or oxidoreductases. They are also composed of up to 4 major facilitator superfamily transporters, and transcription factors probably involved in the regulation of the expression of those clusters (Probable).</text>
</comment>
<comment type="pathway">
    <text evidence="11">Secondary metabolite biosynthesis.</text>
</comment>
<comment type="domain">
    <text evidence="11">NRP synthetases are composed of discrete domains (adenylation (A), thiolation (T) or peptidyl carrier protein (PCP) and condensation (C) domains) which when grouped together are referred to as a single module. Each module is responsible for the recognition (via the A domain) and incorporation of a single amino acid into the growing peptide product. Thus, an NRP synthetase is generally composed of one or more modules and can terminate in a thioesterase domain (TE) that releases the newly synthesized peptide from the enzyme. Occasionally, epimerase (E) domains (responsible for L- to D- amino acid conversion) are present within the NRP synthetase. MlfA has the following architecture: A-T-C-A-T-C-A-T-C-C-A-T-C, with the functions of the five condensation domains during malformin biosynthesis being DL-joining (epimerizing subtype), LL-joining, epimerization, DL-joining and cyclizing domain, respectively.</text>
</comment>
<comment type="biotechnology">
    <text evidence="4 5 6 7">Malformins show anti-tumor properties against human colorectal and prostate cancer cells by the inhibition of proliferation and induction of apoptosis through the activation of the p38 signaling pathway (PubMed:26540166, PubMed:26645406, PubMed:28713983). Malformin C has also been shown to exhibit potent antimalarial and antitrypanosomal properties (PubMed:19876076).</text>
</comment>
<comment type="similarity">
    <text evidence="10">Belongs to the NRP synthetase family.</text>
</comment>
<sequence>MSRFSCIFPTLTDGYVSNPDHTRAAGRRTYTIDLSGWKAPGSETEAHILAAWGLVLSSYVGTDEVAFYVVPTTGPDTTALADLKVEGDMSRQSLTYAAEQLLHPGLVGAGQVSGETANTIITFAKDIESLFVTQTEAANVGTAMAQALAEVGTCDNDRLIKDLNLMSPAHLEHIWRFNANVPGIWEESFHDVIERHATNRPHSPAVDAWDTKLTYADLVREARLLAAYLQQRGVGPGSVVPISFERSGAALVAMLAVSKAGGAFVSVPPNLPAGRLDAILDVIEAPFVVTWTRYESFWAERLPTLPIDNYPKPAADTTVEALGKPEDLFYVIFTSGSTGRPKGCMLSHSNWLNGALRNAPSWKYGPESRVLQMLSHTFDMSLLEICTSLGSGACVNHVIMTPSLARALRPDDVPELKTMCLGGEAFPKEIVTMWSERINLWQFYGPSECSINSSSRPITRPDADPLNIGPPNSAACWVADVHNYNKLVPVGAIGELLVSGPIVGMGYMKNPVKTAEAFLEEVGFVAKDDPQFGGFRFYRTGDLVRWNSDGTITFCGRADTQVKLNGQRLELAEVEYQLGLESGVQYAIAMAPQAGLCKNNLIAILTVKGTSTGNQDTAADEIPLLDRRDPIVQETVKKLRSQLQHALPRYMVPTIWAFVGRMPMSASGKIDRVQLRDWVQKMNQETFDAITGRSLEAEDHVLGLSRLEQEVQLAWAEALSLSAAEVGLQQPFVALGGDSIKALDAVARCRARQIKISMVHTLSCEGVREAASLAEVQETPAQQVAEMAVDYSNLWTRLSDDYDLDKLGVTQLEEVEDVFPCTTMQEGMFLGQIRRPGAYHMRFFHRVQLKGGCLPTVERIQQAWASLVERHPSLRTVFVDDLSPEAIYHSIVLRSVPMELRMREVPRDLRAEAALAMFTEELVPFRANAPLHRMLLLTCRGRVPYFMLEISHVIMDGYALSVFRREFIRACSSSAPLPRGPDYRMFANYHRTRQTDDSARYWTNYLADCVPCHIPTHAVSAPSDAPPEWPRTLQRRDFGFENSAAFLQRCKERQVTLACAIRAAWALVLRAYTQSEDVCFGYVSSGRNVPVPEVETIFGLCLSMQVCRARLSEASTIASLARKIQEDYAASLPFQHYPLAEAQRGLKQTHGQGLFNTAISMEWVPPSVEDEDALLDLEEICEQDDPTEYDIAISVDVHEGHIKLGFLYWPNLTDFEITHLAEALRGAMNRFAFQPDEALNTLSLLQASDVCSALADGPTLLPLEAVRGNVVSMIDRWVTRQPEGAAIDGWDGSLSYKELHEQSSWVARNLLHQGVQLGDRVLVSCEPDACWCSRTRRTQRSASNGWQKKCNAALIVADPTYEERFATAGARVLSTTTVCAPAAWDYEFPSLDEHDLVSILFTSGSTGTPKGILMEHGALATSVLLGHGRTLRFSRYTRMLHFASLTFDAALAEMFTTLAHGGCICVPCEDDRLSDVSGCISRFAVNTAMLTPSVGRLLDPGALLTLKTLIMVGEPMSRLDVERFAPVLDLYNGAGPTETSIMVTIAGPMEPTDEPVNLGYAVAGVRLWVTEAENPNRLAPLGAVGELIVEGRLVTRGYLDGPARTQEAFLPSLPWLPSQHALYRTGDLVRYADDGSLRYMGRKDTQVKLRGQRIELQEVEYHLRKSLQQAQIVVEMVVPAGKMRAQASLVAFVSGLTAEDVESSSACNLEGTILISQIVLPKSAFQALEEVLPRHMIPSVYNALDTIPLSVNGKADRRRLLPPIRTPLKESKSVKWTPASELERTLLELWAATLGLEAETIHGDDSFFELGGDFVSAMKLVATARDKFKLSLSVPQMFRYPTICHLAAEVGEPAGQSASSASSTTEEGFTFSTPDDSSTNDGVDDDFLELVTAQLAQLAQEKGKKVDIAALLKQLQGGSSSNKTPSVSSSSSSSSSSKRKKNAAKAESLAEAAAPIPVQFSLLDGGADALDKVRAQAVEHCKITHEDIEDIYPATALQEGMMALTARTPGVYTTSLTGNLSELVDLAWLQYAWGKAAEAHPILRTRIILTDNNTAVQVVQRAKGLPWDTYSLREDDVLPDLTSNMTSGSPLLRLALVHRQNQPRMLLVAIHHALYDGWSMPLLKQAVEDAYHGRDLRSQPFTPFIKHLIAGKPAAQDFWTTHLDSFVGGIFPKLPSIYHQIQPTKRRTRPMTLPTAAPKAQYTMATKIQAAWAVTVPRYAEVNDIVFGTVSTGRSAPVPAIDRMVGPTITTVPVRISLGDQADRVLSLLQRVQEDSWNKLDHEHLGLQHIRHLGESAAAACSFQTLLVILPREQPDTKYRSTLLSGLQDVAELEGVDTYPLMLVCEPDSARLHLTAVFDRAVLDGATLDRMLAHWELVLTQMWNEPDMAVIEIDAVSCSDKETLMRWNTGETIPDGCAHDAVCEWSRRTPHAPAVCAWDGDWTYEELERCSSLVASQIFAHGLSSGDFVALYHEKSRWTAAGILALFKAGAILITLDPAHPTDRIKDILDQARPRLILTSQSLLDVARNLETPVLSVQLAASQPLPEGWSSLPTISPTLAAYAPFTSGSTGRPKGIPLDHRGLAASTASIARSCLLRPASRVLHFASFAFDASMMEQLIAWHAGGCLCIPDETARQTDLAKCIRDFNVTWAFLAPSCLRLITPDDVPSLQALGLGGESMTSEDITIWSPRLRQIIQLYGPAECCIVAALTEVTKPSENRLIGRPNACRCWVVDPQNPDRLAPIGAVGELLIEGITVGRGYINDPDRTTPAFIRPPKWLQTLYPDDQEPKRLYRTGDLVRYAGVDGKLAFIGRRDGQLKLHGQRTELADVEAHLRSLIPGMQKMVVEMVHSADNQSPFLAAFLEEISTSQKPKEREIGLLHLSQSQCALDVKAIDSALSRTVPQYMIPSMYLHISRLPLSASGKLDRRHLREMVAELPHQRINEYAAGSGLSVPDRPVTSQEREMQAIWARVLSLDPNTIGVNDDFFRIGGDSISGMQVSTKCNAAGIHITSADLFRHRTIEQLICHINTIRTTDCASVSLPTEPVDEWVALAPIQQLFFEVAPEGPNHFNQSLLLRTSRRVGVEELAGGLDILIGRYSMLRARFCRKDSGQWFQQVKSLDSEPVSAFYRLAAHNQITRESLPTLFTAAQMALSIEDGPLLTVDLVELKDGSQLVYLAAHHLIIDLVSWRILHGDLEEYLQTGSLSSATGSVPFLTWTQLQAEYSAEHLTPARALPGFQEANDDFDVMRYWGISSESNTFGQTSTSRFTLDRTVTDILFGSANKVMDTRPVEILQAALWYSCNQALTDHPGPRIYVEGHGREPWTDSIDVSGTVGWFTIMSPLVSTPWHHLSRKSMRDFVDVLSYIKDQRRRIPANGWAYFTSHYLNDEGRVAYGRTKPVMEVLFNYMGQYQEMKREDAMLQLAGDDVQSGTGASDIADNVPRFSLIDVTAFTANGCLTFEFTFPQLIQQDARLEHCIKESFDGPTCPRRLEYLPLLSRATGHVVGAAARSAGISATIQVSGYVSRANRPTFIGKVSDHSHFDQVVMVPGSLQHLVRGDAMDANPTEGLPHTINITSDSTGAIICEWNVSHALVDAMSIAVIQREVNQALEGSLGQHQNLPQYVEYIEWLTLQDNTEAQAYWQKYLDGVEPCLFPKLTSSPDKVNPEATIAAIRATWSRDARMDELCHKHAITLTNLFHIVWAIVLGAYVGTDEVCFGYTALGRDVPVHRVETMVGPLVNVLATTVRHEENETILNALLTHQAHLTNSLQHQHYALADVYAALGLVGSQLFNAIVSLQDTSHFDAPDEQRTRLEMLPANDVSEYDVALNIGVDKSSIQLVRSYQTVSLSAEQADALLRTAFHVLDEILRDPTQRFCELEVISPKCKEQLVKWNAGMLAPTDEYIHEKIQGQCRIHNSRQAVCAWDGIFTYAEVDDLSSRLAARLIRMGVTSEDIIPIYSPKSRWTVIAILGVLKAGAAFTLLETSHPMARLHVICNQIKAPMIIAPASHAIPAANLAPILVVLDKIMSLAQERPVPLPAVGIPPAREALAYLIFTSGSTGNPKVVMVTHQNLCSNASIITTSVNMTSDSRVLQFASHAFDACILGLLGALIAGACLIIPSESENKEDLAGCMERMDVTWALLTPSVARILKPETLPRLLNLVLGGEPIAASDLDMWRGHVQVVCAYGPTETTIVASTTSPSTFPMDGKNIGVPSGSSLWVVSRQNYQKLAPLGATGELLIEGPNVSLGYLGDPGKANKAFPDSPIWLSQLRKSPTRVYRTGDLVRFDTTTGTIRFVGRKDNQIKFHGQRIELGEIEHHAQLAFSSASMVIVDLITPEQPQQPYIVAFVHQSDAANETTDTNDTLLLPPSEAFRADALAAQNKMYERLPHYMVPAVFLPLHRLPLSVTGKADRKRLRQCALALSSPELSAYRATASRKRMPSTAAERKMQGLVATVLGRDPTEIGMDDSFFYLGGDSVQAMRLVAEGRQQGLTLSLRAIFDSPCLGDLSDQAKSLIEDNQRASTASRGNLRYDCDQIDKIVATKSLNKTDVVDVLPTTSFQHHWLDAQLKSYIVADISGPIDPARLLRAMHRVVEAHPILRVSFVPYENTTMQVILNKAVAIKSADPSNTTVEEICRQDADTPTVPGMPYLRVILATQVEADHTLILRLSHAQYDAVSLSLLMNDLGHAYANETHPLPSSHFPRFNDYTTYQQAQRADPTAITFWRHLLQDVSLTYLNLQPAESSASNGTPITLSRDIDIAIFPSLPSDITIATTVKAAWSLVLAQKTNSPAVIFGQVVHGRAIALPGVEGIIGPCANITPVVARLGLQTTGLELMQTLQDQHRSAMPYETVDLDDALAYAKDSQAGRKGLQTIVQHQNNVMVDDMELSLGEVKCGVDVRAVDHLPKEVWVYSSVDEKRPGMLEVKIMSSTLVLGEEVAEELMGLLVEKIVGLLRHPESVCF</sequence>
<organism>
    <name type="scientific">Aspergillus neoniger (strain CBS 115656)</name>
    <dbReference type="NCBI Taxonomy" id="1448310"/>
    <lineage>
        <taxon>Eukaryota</taxon>
        <taxon>Fungi</taxon>
        <taxon>Dikarya</taxon>
        <taxon>Ascomycota</taxon>
        <taxon>Pezizomycotina</taxon>
        <taxon>Eurotiomycetes</taxon>
        <taxon>Eurotiomycetidae</taxon>
        <taxon>Eurotiales</taxon>
        <taxon>Aspergillaceae</taxon>
        <taxon>Aspergillus</taxon>
        <taxon>Aspergillus subgen. Circumdati</taxon>
    </lineage>
</organism>
<protein>
    <recommendedName>
        <fullName evidence="9">Malformin synthetase mlfA</fullName>
        <ecNumber evidence="8">6.3.2.-</ecNumber>
    </recommendedName>
    <alternativeName>
        <fullName evidence="9">Malformin biosynthesis cluster protein A</fullName>
    </alternativeName>
    <alternativeName>
        <fullName evidence="9">Nonribosomal peptide synthetase mlfA</fullName>
    </alternativeName>
</protein>
<feature type="chain" id="PRO_0000446436" description="Malformin synthetase mlfA">
    <location>
        <begin position="1"/>
        <end position="4960"/>
    </location>
</feature>
<feature type="domain" description="Carrier 1" evidence="2">
    <location>
        <begin position="705"/>
        <end position="778"/>
    </location>
</feature>
<feature type="domain" description="Carrier 2" evidence="2">
    <location>
        <begin position="1777"/>
        <end position="1854"/>
    </location>
</feature>
<feature type="domain" description="Carrier 3" evidence="2">
    <location>
        <begin position="2955"/>
        <end position="3031"/>
    </location>
</feature>
<feature type="domain" description="Carrier 4" evidence="2">
    <location>
        <begin position="4438"/>
        <end position="4514"/>
    </location>
</feature>
<feature type="region of interest" description="Adenylation 1" evidence="1">
    <location>
        <begin position="194"/>
        <end position="564"/>
    </location>
</feature>
<feature type="region of interest" description="Condensation 1" evidence="1">
    <location>
        <begin position="816"/>
        <end position="1247"/>
    </location>
</feature>
<feature type="region of interest" description="Adenylation 2" evidence="1">
    <location>
        <begin position="1275"/>
        <end position="1650"/>
    </location>
</feature>
<feature type="region of interest" description="Disordered" evidence="3">
    <location>
        <begin position="1855"/>
        <end position="1883"/>
    </location>
</feature>
<feature type="region of interest" description="Disordered" evidence="3">
    <location>
        <begin position="1917"/>
        <end position="1943"/>
    </location>
</feature>
<feature type="region of interest" description="Condensation 2" evidence="1">
    <location>
        <begin position="1989"/>
        <end position="2404"/>
    </location>
</feature>
<feature type="region of interest" description="Adenylation 3" evidence="1">
    <location>
        <begin position="2427"/>
        <end position="2819"/>
    </location>
</feature>
<feature type="region of interest" description="Condensation 3" evidence="1">
    <location>
        <begin position="3049"/>
        <end position="3464"/>
    </location>
</feature>
<feature type="region of interest" description="Condensation 4" evidence="1">
    <location>
        <begin position="3520"/>
        <end position="3889"/>
    </location>
</feature>
<feature type="region of interest" description="Adenylation 4" evidence="1">
    <location>
        <begin position="3914"/>
        <end position="4304"/>
    </location>
</feature>
<feature type="region of interest" description="Condensation 5" evidence="1">
    <location>
        <begin position="4551"/>
        <end position="4878"/>
    </location>
</feature>
<feature type="compositionally biased region" description="Low complexity" evidence="3">
    <location>
        <begin position="1857"/>
        <end position="1881"/>
    </location>
</feature>
<feature type="compositionally biased region" description="Low complexity" evidence="3">
    <location>
        <begin position="1919"/>
        <end position="1936"/>
    </location>
</feature>
<feature type="modified residue" description="O-(pantetheine 4'-phosphoryl)serine" evidence="2">
    <location>
        <position position="739"/>
    </location>
</feature>
<feature type="modified residue" description="O-(pantetheine 4'-phosphoryl)serine" evidence="2">
    <location>
        <position position="2992"/>
    </location>
</feature>
<feature type="modified residue" description="O-(pantetheine 4'-phosphoryl)serine" evidence="2">
    <location>
        <position position="4475"/>
    </location>
</feature>
<name>MLFA_ASPNB</name>
<evidence type="ECO:0000255" key="1"/>
<evidence type="ECO:0000255" key="2">
    <source>
        <dbReference type="PROSITE-ProRule" id="PRU00258"/>
    </source>
</evidence>
<evidence type="ECO:0000256" key="3">
    <source>
        <dbReference type="SAM" id="MobiDB-lite"/>
    </source>
</evidence>
<evidence type="ECO:0000269" key="4">
    <source>
    </source>
</evidence>
<evidence type="ECO:0000269" key="5">
    <source>
    </source>
</evidence>
<evidence type="ECO:0000269" key="6">
    <source>
    </source>
</evidence>
<evidence type="ECO:0000269" key="7">
    <source>
    </source>
</evidence>
<evidence type="ECO:0000269" key="8">
    <source>
    </source>
</evidence>
<evidence type="ECO:0000303" key="9">
    <source>
    </source>
</evidence>
<evidence type="ECO:0000305" key="10"/>
<evidence type="ECO:0000305" key="11">
    <source>
    </source>
</evidence>